<protein>
    <recommendedName>
        <fullName evidence="1">5'/3'-nucleotidase SurE</fullName>
        <ecNumber evidence="1">3.1.3.5</ecNumber>
        <ecNumber evidence="1">3.1.3.6</ecNumber>
    </recommendedName>
    <alternativeName>
        <fullName evidence="1">Exopolyphosphatase</fullName>
        <ecNumber evidence="1">3.6.1.11</ecNumber>
    </alternativeName>
    <alternativeName>
        <fullName evidence="1">Nucleoside monophosphate phosphohydrolase</fullName>
    </alternativeName>
</protein>
<sequence>MIRILLSNDDGISAPGIQTLASALRGFAQVQIVAPDRNRSGASNALTLDSALRITTLSNGDIAVQQGTPTDCVYLGVNALMRPRPDIVVSGINAGPNLGDDVIYSGTVAAAMEGRHLGYPALAVSLNGHQHYDTAAAVTCRLLRALQRKPLRTGKILNINVPDLPLAEIKGIRVTRCGSRHPAEQVFCQQDPRGQDLYWIGPPGEKYDAGPDTDFAAVEQGYVSITPLQVDLTAYMAQEVVESWLANTEVDGEW</sequence>
<reference key="1">
    <citation type="submission" date="2007-02" db="EMBL/GenBank/DDBJ databases">
        <title>Complete sequence of chromosome of Yersinia pestis Pestoides F.</title>
        <authorList>
            <consortium name="US DOE Joint Genome Institute"/>
            <person name="Copeland A."/>
            <person name="Lucas S."/>
            <person name="Lapidus A."/>
            <person name="Barry K."/>
            <person name="Detter J.C."/>
            <person name="Glavina del Rio T."/>
            <person name="Hammon N."/>
            <person name="Israni S."/>
            <person name="Dalin E."/>
            <person name="Tice H."/>
            <person name="Pitluck S."/>
            <person name="Di Bartolo G."/>
            <person name="Chain P."/>
            <person name="Malfatti S."/>
            <person name="Shin M."/>
            <person name="Vergez L."/>
            <person name="Schmutz J."/>
            <person name="Larimer F."/>
            <person name="Land M."/>
            <person name="Hauser L."/>
            <person name="Worsham P."/>
            <person name="Chu M."/>
            <person name="Bearden S."/>
            <person name="Garcia E."/>
            <person name="Richardson P."/>
        </authorList>
    </citation>
    <scope>NUCLEOTIDE SEQUENCE [LARGE SCALE GENOMIC DNA]</scope>
    <source>
        <strain>Pestoides F</strain>
    </source>
</reference>
<comment type="function">
    <text evidence="1">Nucleotidase with a broad substrate specificity as it can dephosphorylate various ribo- and deoxyribonucleoside 5'-monophosphates and ribonucleoside 3'-monophosphates with highest affinity to 3'-AMP. Also hydrolyzes polyphosphate (exopolyphosphatase activity) with the preference for short-chain-length substrates (P20-25). Might be involved in the regulation of dNTP and NTP pools, and in the turnover of 3'-mononucleotides produced by numerous intracellular RNases (T1, T2, and F) during the degradation of various RNAs.</text>
</comment>
<comment type="catalytic activity">
    <reaction evidence="1">
        <text>a ribonucleoside 5'-phosphate + H2O = a ribonucleoside + phosphate</text>
        <dbReference type="Rhea" id="RHEA:12484"/>
        <dbReference type="ChEBI" id="CHEBI:15377"/>
        <dbReference type="ChEBI" id="CHEBI:18254"/>
        <dbReference type="ChEBI" id="CHEBI:43474"/>
        <dbReference type="ChEBI" id="CHEBI:58043"/>
        <dbReference type="EC" id="3.1.3.5"/>
    </reaction>
</comment>
<comment type="catalytic activity">
    <reaction evidence="1">
        <text>a ribonucleoside 3'-phosphate + H2O = a ribonucleoside + phosphate</text>
        <dbReference type="Rhea" id="RHEA:10144"/>
        <dbReference type="ChEBI" id="CHEBI:13197"/>
        <dbReference type="ChEBI" id="CHEBI:15377"/>
        <dbReference type="ChEBI" id="CHEBI:18254"/>
        <dbReference type="ChEBI" id="CHEBI:43474"/>
        <dbReference type="EC" id="3.1.3.6"/>
    </reaction>
</comment>
<comment type="catalytic activity">
    <reaction evidence="1">
        <text>[phosphate](n) + H2O = [phosphate](n-1) + phosphate + H(+)</text>
        <dbReference type="Rhea" id="RHEA:21528"/>
        <dbReference type="Rhea" id="RHEA-COMP:9859"/>
        <dbReference type="Rhea" id="RHEA-COMP:14279"/>
        <dbReference type="ChEBI" id="CHEBI:15377"/>
        <dbReference type="ChEBI" id="CHEBI:15378"/>
        <dbReference type="ChEBI" id="CHEBI:16838"/>
        <dbReference type="ChEBI" id="CHEBI:43474"/>
        <dbReference type="EC" id="3.6.1.11"/>
    </reaction>
</comment>
<comment type="cofactor">
    <cofactor evidence="1">
        <name>a divalent metal cation</name>
        <dbReference type="ChEBI" id="CHEBI:60240"/>
    </cofactor>
    <text evidence="1">Binds 1 divalent metal cation per subunit.</text>
</comment>
<comment type="subcellular location">
    <subcellularLocation>
        <location evidence="1">Cytoplasm</location>
    </subcellularLocation>
</comment>
<comment type="similarity">
    <text evidence="1">Belongs to the SurE nucleotidase family.</text>
</comment>
<organism>
    <name type="scientific">Yersinia pestis (strain Pestoides F)</name>
    <dbReference type="NCBI Taxonomy" id="386656"/>
    <lineage>
        <taxon>Bacteria</taxon>
        <taxon>Pseudomonadati</taxon>
        <taxon>Pseudomonadota</taxon>
        <taxon>Gammaproteobacteria</taxon>
        <taxon>Enterobacterales</taxon>
        <taxon>Yersiniaceae</taxon>
        <taxon>Yersinia</taxon>
    </lineage>
</organism>
<feature type="chain" id="PRO_1000007805" description="5'/3'-nucleotidase SurE">
    <location>
        <begin position="1"/>
        <end position="254"/>
    </location>
</feature>
<feature type="binding site" evidence="1">
    <location>
        <position position="9"/>
    </location>
    <ligand>
        <name>a divalent metal cation</name>
        <dbReference type="ChEBI" id="CHEBI:60240"/>
    </ligand>
</feature>
<feature type="binding site" evidence="1">
    <location>
        <position position="10"/>
    </location>
    <ligand>
        <name>a divalent metal cation</name>
        <dbReference type="ChEBI" id="CHEBI:60240"/>
    </ligand>
</feature>
<feature type="binding site" evidence="1">
    <location>
        <position position="40"/>
    </location>
    <ligand>
        <name>a divalent metal cation</name>
        <dbReference type="ChEBI" id="CHEBI:60240"/>
    </ligand>
</feature>
<feature type="binding site" evidence="1">
    <location>
        <position position="93"/>
    </location>
    <ligand>
        <name>a divalent metal cation</name>
        <dbReference type="ChEBI" id="CHEBI:60240"/>
    </ligand>
</feature>
<accession>A4TQ00</accession>
<proteinExistence type="inferred from homology"/>
<gene>
    <name evidence="1" type="primary">surE</name>
    <name type="ordered locus">YPDSF_3002</name>
</gene>
<name>SURE_YERPP</name>
<keyword id="KW-0963">Cytoplasm</keyword>
<keyword id="KW-0378">Hydrolase</keyword>
<keyword id="KW-0479">Metal-binding</keyword>
<keyword id="KW-0547">Nucleotide-binding</keyword>
<evidence type="ECO:0000255" key="1">
    <source>
        <dbReference type="HAMAP-Rule" id="MF_00060"/>
    </source>
</evidence>
<dbReference type="EC" id="3.1.3.5" evidence="1"/>
<dbReference type="EC" id="3.1.3.6" evidence="1"/>
<dbReference type="EC" id="3.6.1.11" evidence="1"/>
<dbReference type="EMBL" id="CP000668">
    <property type="protein sequence ID" value="ABP41362.1"/>
    <property type="molecule type" value="Genomic_DNA"/>
</dbReference>
<dbReference type="RefSeq" id="WP_002209394.1">
    <property type="nucleotide sequence ID" value="NZ_CP009715.1"/>
</dbReference>
<dbReference type="SMR" id="A4TQ00"/>
<dbReference type="GeneID" id="57975351"/>
<dbReference type="KEGG" id="ypp:YPDSF_3002"/>
<dbReference type="PATRIC" id="fig|386656.14.peg.1361"/>
<dbReference type="GO" id="GO:0005737">
    <property type="term" value="C:cytoplasm"/>
    <property type="evidence" value="ECO:0007669"/>
    <property type="project" value="UniProtKB-SubCell"/>
</dbReference>
<dbReference type="GO" id="GO:0008254">
    <property type="term" value="F:3'-nucleotidase activity"/>
    <property type="evidence" value="ECO:0007669"/>
    <property type="project" value="UniProtKB-UniRule"/>
</dbReference>
<dbReference type="GO" id="GO:0008253">
    <property type="term" value="F:5'-nucleotidase activity"/>
    <property type="evidence" value="ECO:0007669"/>
    <property type="project" value="UniProtKB-UniRule"/>
</dbReference>
<dbReference type="GO" id="GO:0004309">
    <property type="term" value="F:exopolyphosphatase activity"/>
    <property type="evidence" value="ECO:0007669"/>
    <property type="project" value="UniProtKB-UniRule"/>
</dbReference>
<dbReference type="GO" id="GO:0046872">
    <property type="term" value="F:metal ion binding"/>
    <property type="evidence" value="ECO:0007669"/>
    <property type="project" value="UniProtKB-UniRule"/>
</dbReference>
<dbReference type="GO" id="GO:0000166">
    <property type="term" value="F:nucleotide binding"/>
    <property type="evidence" value="ECO:0007669"/>
    <property type="project" value="UniProtKB-KW"/>
</dbReference>
<dbReference type="FunFam" id="3.40.1210.10:FF:000001">
    <property type="entry name" value="5'/3'-nucleotidase SurE"/>
    <property type="match status" value="1"/>
</dbReference>
<dbReference type="Gene3D" id="3.40.1210.10">
    <property type="entry name" value="Survival protein SurE-like phosphatase/nucleotidase"/>
    <property type="match status" value="1"/>
</dbReference>
<dbReference type="HAMAP" id="MF_00060">
    <property type="entry name" value="SurE"/>
    <property type="match status" value="1"/>
</dbReference>
<dbReference type="InterPro" id="IPR030048">
    <property type="entry name" value="SurE"/>
</dbReference>
<dbReference type="InterPro" id="IPR002828">
    <property type="entry name" value="SurE-like_Pase/nucleotidase"/>
</dbReference>
<dbReference type="InterPro" id="IPR036523">
    <property type="entry name" value="SurE-like_sf"/>
</dbReference>
<dbReference type="NCBIfam" id="NF001488">
    <property type="entry name" value="PRK00346.1-1"/>
    <property type="match status" value="1"/>
</dbReference>
<dbReference type="NCBIfam" id="NF001489">
    <property type="entry name" value="PRK00346.1-3"/>
    <property type="match status" value="1"/>
</dbReference>
<dbReference type="NCBIfam" id="NF001490">
    <property type="entry name" value="PRK00346.1-4"/>
    <property type="match status" value="1"/>
</dbReference>
<dbReference type="NCBIfam" id="TIGR00087">
    <property type="entry name" value="surE"/>
    <property type="match status" value="1"/>
</dbReference>
<dbReference type="PANTHER" id="PTHR30457">
    <property type="entry name" value="5'-NUCLEOTIDASE SURE"/>
    <property type="match status" value="1"/>
</dbReference>
<dbReference type="PANTHER" id="PTHR30457:SF12">
    <property type="entry name" value="5'_3'-NUCLEOTIDASE SURE"/>
    <property type="match status" value="1"/>
</dbReference>
<dbReference type="Pfam" id="PF01975">
    <property type="entry name" value="SurE"/>
    <property type="match status" value="1"/>
</dbReference>
<dbReference type="SUPFAM" id="SSF64167">
    <property type="entry name" value="SurE-like"/>
    <property type="match status" value="1"/>
</dbReference>